<gene>
    <name evidence="1" type="primary">rpoB</name>
    <name type="ordered locus">jk1846</name>
</gene>
<name>RPOB_CORJK</name>
<keyword id="KW-0240">DNA-directed RNA polymerase</keyword>
<keyword id="KW-0548">Nucleotidyltransferase</keyword>
<keyword id="KW-1185">Reference proteome</keyword>
<keyword id="KW-0804">Transcription</keyword>
<keyword id="KW-0808">Transferase</keyword>
<organism>
    <name type="scientific">Corynebacterium jeikeium (strain K411)</name>
    <dbReference type="NCBI Taxonomy" id="306537"/>
    <lineage>
        <taxon>Bacteria</taxon>
        <taxon>Bacillati</taxon>
        <taxon>Actinomycetota</taxon>
        <taxon>Actinomycetes</taxon>
        <taxon>Mycobacteriales</taxon>
        <taxon>Corynebacteriaceae</taxon>
        <taxon>Corynebacterium</taxon>
    </lineage>
</organism>
<evidence type="ECO:0000255" key="1">
    <source>
        <dbReference type="HAMAP-Rule" id="MF_01321"/>
    </source>
</evidence>
<evidence type="ECO:0000256" key="2">
    <source>
        <dbReference type="SAM" id="MobiDB-lite"/>
    </source>
</evidence>
<proteinExistence type="inferred from homology"/>
<comment type="function">
    <text evidence="1">DNA-dependent RNA polymerase catalyzes the transcription of DNA into RNA using the four ribonucleoside triphosphates as substrates.</text>
</comment>
<comment type="catalytic activity">
    <reaction evidence="1">
        <text>RNA(n) + a ribonucleoside 5'-triphosphate = RNA(n+1) + diphosphate</text>
        <dbReference type="Rhea" id="RHEA:21248"/>
        <dbReference type="Rhea" id="RHEA-COMP:14527"/>
        <dbReference type="Rhea" id="RHEA-COMP:17342"/>
        <dbReference type="ChEBI" id="CHEBI:33019"/>
        <dbReference type="ChEBI" id="CHEBI:61557"/>
        <dbReference type="ChEBI" id="CHEBI:140395"/>
        <dbReference type="EC" id="2.7.7.6"/>
    </reaction>
</comment>
<comment type="subunit">
    <text evidence="1">The RNAP catalytic core consists of 2 alpha, 1 beta, 1 beta' and 1 omega subunit. When a sigma factor is associated with the core the holoenzyme is formed, which can initiate transcription.</text>
</comment>
<comment type="similarity">
    <text evidence="1">Belongs to the RNA polymerase beta chain family.</text>
</comment>
<protein>
    <recommendedName>
        <fullName evidence="1">DNA-directed RNA polymerase subunit beta</fullName>
        <shortName evidence="1">RNAP subunit beta</shortName>
        <ecNumber evidence="1">2.7.7.6</ecNumber>
    </recommendedName>
    <alternativeName>
        <fullName evidence="1">RNA polymerase subunit beta</fullName>
    </alternativeName>
    <alternativeName>
        <fullName evidence="1">Transcriptase subunit beta</fullName>
    </alternativeName>
</protein>
<dbReference type="EC" id="2.7.7.6" evidence="1"/>
<dbReference type="EMBL" id="CR931997">
    <property type="protein sequence ID" value="CAI38025.1"/>
    <property type="molecule type" value="Genomic_DNA"/>
</dbReference>
<dbReference type="SMR" id="Q4JT32"/>
<dbReference type="STRING" id="306537.jk1846"/>
<dbReference type="KEGG" id="cjk:jk1846"/>
<dbReference type="eggNOG" id="COG0085">
    <property type="taxonomic scope" value="Bacteria"/>
</dbReference>
<dbReference type="HOGENOM" id="CLU_000524_4_1_11"/>
<dbReference type="Proteomes" id="UP000000545">
    <property type="component" value="Chromosome"/>
</dbReference>
<dbReference type="GO" id="GO:0000428">
    <property type="term" value="C:DNA-directed RNA polymerase complex"/>
    <property type="evidence" value="ECO:0007669"/>
    <property type="project" value="UniProtKB-KW"/>
</dbReference>
<dbReference type="GO" id="GO:0003677">
    <property type="term" value="F:DNA binding"/>
    <property type="evidence" value="ECO:0007669"/>
    <property type="project" value="UniProtKB-UniRule"/>
</dbReference>
<dbReference type="GO" id="GO:0003899">
    <property type="term" value="F:DNA-directed RNA polymerase activity"/>
    <property type="evidence" value="ECO:0007669"/>
    <property type="project" value="UniProtKB-UniRule"/>
</dbReference>
<dbReference type="GO" id="GO:0032549">
    <property type="term" value="F:ribonucleoside binding"/>
    <property type="evidence" value="ECO:0007669"/>
    <property type="project" value="InterPro"/>
</dbReference>
<dbReference type="GO" id="GO:0006351">
    <property type="term" value="P:DNA-templated transcription"/>
    <property type="evidence" value="ECO:0007669"/>
    <property type="project" value="UniProtKB-UniRule"/>
</dbReference>
<dbReference type="CDD" id="cd00653">
    <property type="entry name" value="RNA_pol_B_RPB2"/>
    <property type="match status" value="1"/>
</dbReference>
<dbReference type="Gene3D" id="2.40.50.100">
    <property type="match status" value="1"/>
</dbReference>
<dbReference type="Gene3D" id="2.40.50.150">
    <property type="match status" value="1"/>
</dbReference>
<dbReference type="Gene3D" id="3.90.1100.10">
    <property type="match status" value="1"/>
</dbReference>
<dbReference type="Gene3D" id="2.30.150.10">
    <property type="entry name" value="DNA-directed RNA polymerase, beta subunit, external 1 domain"/>
    <property type="match status" value="1"/>
</dbReference>
<dbReference type="Gene3D" id="2.40.270.10">
    <property type="entry name" value="DNA-directed RNA polymerase, subunit 2, domain 6"/>
    <property type="match status" value="1"/>
</dbReference>
<dbReference type="Gene3D" id="3.90.1800.10">
    <property type="entry name" value="RNA polymerase alpha subunit dimerisation domain"/>
    <property type="match status" value="1"/>
</dbReference>
<dbReference type="Gene3D" id="3.90.1110.10">
    <property type="entry name" value="RNA polymerase Rpb2, domain 2"/>
    <property type="match status" value="1"/>
</dbReference>
<dbReference type="HAMAP" id="MF_01321">
    <property type="entry name" value="RNApol_bact_RpoB"/>
    <property type="match status" value="1"/>
</dbReference>
<dbReference type="InterPro" id="IPR042107">
    <property type="entry name" value="DNA-dir_RNA_pol_bsu_ext_1_sf"/>
</dbReference>
<dbReference type="InterPro" id="IPR019462">
    <property type="entry name" value="DNA-dir_RNA_pol_bsu_external_1"/>
</dbReference>
<dbReference type="InterPro" id="IPR015712">
    <property type="entry name" value="DNA-dir_RNA_pol_su2"/>
</dbReference>
<dbReference type="InterPro" id="IPR007120">
    <property type="entry name" value="DNA-dir_RNAP_su2_dom"/>
</dbReference>
<dbReference type="InterPro" id="IPR037033">
    <property type="entry name" value="DNA-dir_RNAP_su2_hyb_sf"/>
</dbReference>
<dbReference type="InterPro" id="IPR010243">
    <property type="entry name" value="RNA_pol_bsu_bac"/>
</dbReference>
<dbReference type="InterPro" id="IPR007121">
    <property type="entry name" value="RNA_pol_bsu_CS"/>
</dbReference>
<dbReference type="InterPro" id="IPR007644">
    <property type="entry name" value="RNA_pol_bsu_protrusion"/>
</dbReference>
<dbReference type="InterPro" id="IPR007642">
    <property type="entry name" value="RNA_pol_Rpb2_2"/>
</dbReference>
<dbReference type="InterPro" id="IPR037034">
    <property type="entry name" value="RNA_pol_Rpb2_2_sf"/>
</dbReference>
<dbReference type="InterPro" id="IPR007645">
    <property type="entry name" value="RNA_pol_Rpb2_3"/>
</dbReference>
<dbReference type="InterPro" id="IPR007641">
    <property type="entry name" value="RNA_pol_Rpb2_7"/>
</dbReference>
<dbReference type="InterPro" id="IPR014724">
    <property type="entry name" value="RNA_pol_RPB2_OB-fold"/>
</dbReference>
<dbReference type="NCBIfam" id="NF001616">
    <property type="entry name" value="PRK00405.1"/>
    <property type="match status" value="1"/>
</dbReference>
<dbReference type="NCBIfam" id="TIGR02013">
    <property type="entry name" value="rpoB"/>
    <property type="match status" value="1"/>
</dbReference>
<dbReference type="PANTHER" id="PTHR20856">
    <property type="entry name" value="DNA-DIRECTED RNA POLYMERASE I SUBUNIT 2"/>
    <property type="match status" value="1"/>
</dbReference>
<dbReference type="Pfam" id="PF04563">
    <property type="entry name" value="RNA_pol_Rpb2_1"/>
    <property type="match status" value="1"/>
</dbReference>
<dbReference type="Pfam" id="PF04561">
    <property type="entry name" value="RNA_pol_Rpb2_2"/>
    <property type="match status" value="1"/>
</dbReference>
<dbReference type="Pfam" id="PF04565">
    <property type="entry name" value="RNA_pol_Rpb2_3"/>
    <property type="match status" value="1"/>
</dbReference>
<dbReference type="Pfam" id="PF10385">
    <property type="entry name" value="RNA_pol_Rpb2_45"/>
    <property type="match status" value="1"/>
</dbReference>
<dbReference type="Pfam" id="PF00562">
    <property type="entry name" value="RNA_pol_Rpb2_6"/>
    <property type="match status" value="1"/>
</dbReference>
<dbReference type="Pfam" id="PF04560">
    <property type="entry name" value="RNA_pol_Rpb2_7"/>
    <property type="match status" value="1"/>
</dbReference>
<dbReference type="SUPFAM" id="SSF64484">
    <property type="entry name" value="beta and beta-prime subunits of DNA dependent RNA-polymerase"/>
    <property type="match status" value="1"/>
</dbReference>
<dbReference type="PROSITE" id="PS01166">
    <property type="entry name" value="RNA_POL_BETA"/>
    <property type="match status" value="1"/>
</dbReference>
<sequence length="1164" mass="129104">MAVSRQTSSVAGIPGAPQRHSFAKIDAPIEVPGLLDLQRESFAWLVGTPEWRARAQAEAGEDVRIMSGLEEILEELSPIEDYSENMSLTLSEPRFDDVKSTIDEAKDKDINYAAPLYVTAEFTNSMSGEIKSQTVFIGDFPMMTDKGTFIINGTERVVVSQLVRSPGVYFDASIDASTERPLHSVKVIPSRGAWLEFDVDKRDTVGVRIDRKRRQPVTVLLKALGLTTQEITDRFGFSELMMSTLEKDGVDNTDEALLEIYRKQRPGESPTRDSAQALLENSFFKAKRYDLAKVGRYKVNRKLGLGGDTDGVMTLTEEDILTTIEYLVRLHAGEKSMTSPDGTEIPIDTDDIDHFGNRRLRTVGELIQNQVRVGLSRMERVVRERMTTQDAESITPTSLINVRPVSAAIREFFGTSQLSQFLDQNNSLSGLTHKRRLSALGPGGLSRERAGLEVRDVHPSHYGRMCPIETPEGPNIGLIGSLSSYARVNPFGFIETPYRKVVDGQITDEVYYFTADEEDRHVIAQANTPFDENHRFTEERIEVRLRGGDVEVVPYTEVDYMDVSPRQMVSVATAMIPFLEHDDANRALMGANMQRQAVPLLRSEAPFVGTGMELRAAYDAGDMIIAPKAGVVEYVSADYITVMDDEGVRDTFMLRKFERTNQGTCYNQTPLVDEGDRVEAGQVLADGPGTDNGEMALGKNLLVAFMPWEGHNYEDAIILNQRMVEEDVLTSIHIEEYEIDARDTKLGPEEITRDIPNVGEDVLADLDERGIVRIGADVRDGDILVGKVTPKGETELTPEERLLRAIFGEKAREVRDTSMKVPHGETGKVIGVRVFSREDDDDLAAGVNEMVRVYVAQKRKIQDGDKLAGRHGNKGVVGKILPQEDMPFLPDGTPIDIILNTHGVPRRMNIGQVLEVHLGWLAKAGWKVDPDSQDPKIQKMLETLPEELYEIPADSLTATPVFDGASNAELSGLLRSSLPNRDGERQVDDFGKSNLIDGRSGEPFPYPVAVGYMYMLKLHHLVDEKIHARSTGPYSMITQQPLGGKAQFGGQRFGEMEVWAMQAYGAAYTLQELLTIKSDDVVGRVKVYEAIVKGENIPDPGIPESFKVLLKELQSLCLNVEVLAADGTPMELSSDDDDELENANAALGINLSRDERPDADMDVS</sequence>
<feature type="chain" id="PRO_0000224047" description="DNA-directed RNA polymerase subunit beta">
    <location>
        <begin position="1"/>
        <end position="1164"/>
    </location>
</feature>
<feature type="region of interest" description="Disordered" evidence="2">
    <location>
        <begin position="975"/>
        <end position="994"/>
    </location>
</feature>
<feature type="region of interest" description="Disordered" evidence="2">
    <location>
        <begin position="1143"/>
        <end position="1164"/>
    </location>
</feature>
<feature type="compositionally biased region" description="Basic and acidic residues" evidence="2">
    <location>
        <begin position="981"/>
        <end position="991"/>
    </location>
</feature>
<feature type="compositionally biased region" description="Basic and acidic residues" evidence="2">
    <location>
        <begin position="1152"/>
        <end position="1164"/>
    </location>
</feature>
<accession>Q4JT32</accession>
<reference key="1">
    <citation type="journal article" date="2005" name="J. Bacteriol.">
        <title>Complete genome sequence and analysis of the multiresistant nosocomial pathogen Corynebacterium jeikeium K411, a lipid-requiring bacterium of the human skin flora.</title>
        <authorList>
            <person name="Tauch A."/>
            <person name="Kaiser O."/>
            <person name="Hain T."/>
            <person name="Goesmann A."/>
            <person name="Weisshaar B."/>
            <person name="Albersmeier A."/>
            <person name="Bekel T."/>
            <person name="Bischoff N."/>
            <person name="Brune I."/>
            <person name="Chakraborty T."/>
            <person name="Kalinowski J."/>
            <person name="Meyer F."/>
            <person name="Rupp O."/>
            <person name="Schneiker S."/>
            <person name="Viehoever P."/>
            <person name="Puehler A."/>
        </authorList>
    </citation>
    <scope>NUCLEOTIDE SEQUENCE [LARGE SCALE GENOMIC DNA]</scope>
    <source>
        <strain>K411</strain>
    </source>
</reference>